<gene>
    <name type="primary">D6PKL3</name>
    <name type="synonym">PK7</name>
    <name type="ordered locus">At3g27580</name>
    <name type="ORF">MMJ24.14</name>
</gene>
<proteinExistence type="evidence at protein level"/>
<evidence type="ECO:0000250" key="1"/>
<evidence type="ECO:0000255" key="2">
    <source>
        <dbReference type="PROSITE-ProRule" id="PRU00159"/>
    </source>
</evidence>
<evidence type="ECO:0000255" key="3">
    <source>
        <dbReference type="PROSITE-ProRule" id="PRU10027"/>
    </source>
</evidence>
<evidence type="ECO:0000256" key="4">
    <source>
        <dbReference type="SAM" id="MobiDB-lite"/>
    </source>
</evidence>
<evidence type="ECO:0000269" key="5">
    <source>
    </source>
</evidence>
<evidence type="ECO:0000269" key="6">
    <source>
    </source>
</evidence>
<evidence type="ECO:0000305" key="7"/>
<protein>
    <recommendedName>
        <fullName>Serine/threonine-protein kinase D6PKL3</fullName>
        <ecNumber>2.7.11.1</ecNumber>
    </recommendedName>
    <alternativeName>
        <fullName>D6 protein kinase-like 3</fullName>
    </alternativeName>
    <alternativeName>
        <fullName>Serine/threonine-protein kinase AtPK7</fullName>
    </alternativeName>
</protein>
<accession>Q05999</accession>
<accession>Q67YR9</accession>
<comment type="function">
    <text evidence="5 6">Protein kinase that regulates the auxin transport activity of PIN auxin efflux facilitators by direct phosphorylation. D6PK-mediated PIN phosphorylation promotes auxin transport in the hypocotyl and this is a prerequisite for PHOT1-dependent hypocotyl bending.</text>
</comment>
<comment type="catalytic activity">
    <reaction>
        <text>L-seryl-[protein] + ATP = O-phospho-L-seryl-[protein] + ADP + H(+)</text>
        <dbReference type="Rhea" id="RHEA:17989"/>
        <dbReference type="Rhea" id="RHEA-COMP:9863"/>
        <dbReference type="Rhea" id="RHEA-COMP:11604"/>
        <dbReference type="ChEBI" id="CHEBI:15378"/>
        <dbReference type="ChEBI" id="CHEBI:29999"/>
        <dbReference type="ChEBI" id="CHEBI:30616"/>
        <dbReference type="ChEBI" id="CHEBI:83421"/>
        <dbReference type="ChEBI" id="CHEBI:456216"/>
        <dbReference type="EC" id="2.7.11.1"/>
    </reaction>
</comment>
<comment type="catalytic activity">
    <reaction>
        <text>L-threonyl-[protein] + ATP = O-phospho-L-threonyl-[protein] + ADP + H(+)</text>
        <dbReference type="Rhea" id="RHEA:46608"/>
        <dbReference type="Rhea" id="RHEA-COMP:11060"/>
        <dbReference type="Rhea" id="RHEA-COMP:11605"/>
        <dbReference type="ChEBI" id="CHEBI:15378"/>
        <dbReference type="ChEBI" id="CHEBI:30013"/>
        <dbReference type="ChEBI" id="CHEBI:30616"/>
        <dbReference type="ChEBI" id="CHEBI:61977"/>
        <dbReference type="ChEBI" id="CHEBI:456216"/>
        <dbReference type="EC" id="2.7.11.1"/>
    </reaction>
</comment>
<comment type="interaction">
    <interactant intactId="EBI-1103648">
        <id>Q05999</id>
    </interactant>
    <interactant intactId="EBI-4426649">
        <id>Q17TI5</id>
        <label>BRX</label>
    </interactant>
    <organismsDiffer>false</organismsDiffer>
    <experiments>4</experiments>
</comment>
<comment type="interaction">
    <interactant intactId="EBI-1103648">
        <id>Q05999</id>
    </interactant>
    <interactant intactId="EBI-1103587">
        <id>Q9XF67</id>
        <label>PDPK1</label>
    </interactant>
    <organismsDiffer>false</organismsDiffer>
    <experiments>2</experiments>
</comment>
<comment type="subcellular location">
    <subcellularLocation>
        <location evidence="1">Cell membrane</location>
        <topology evidence="1">Peripheral membrane protein</topology>
    </subcellularLocation>
    <text evidence="1">Colocalizes with PIN1 to the basal (lower) membrane of root cells.</text>
</comment>
<comment type="tissue specificity">
    <text>Expressed predominantly in root tissue with lower levels found in leaf, stem, seed and flower.</text>
</comment>
<comment type="domain">
    <text evidence="1">The activation loop within the kinase domain is the target of phosphorylation.</text>
</comment>
<comment type="disruption phenotype">
    <text evidence="5 6">No visible phenotype under normal growth conditions, but the quadruple d6pk, d6pkl1, d6pkl2 and d6pkl3 mutants are deficient in lateral root formation and mildly agravitropic, have fused or single cotyledons and narrow and twisted leaves, form few axillary shoots, are almost infertile and impaired in phototropic hypocotyl bending when exposed to lateral white light.</text>
</comment>
<comment type="similarity">
    <text evidence="7">Belongs to the protein kinase superfamily. AGC Ser/Thr protein kinase family.</text>
</comment>
<organism>
    <name type="scientific">Arabidopsis thaliana</name>
    <name type="common">Mouse-ear cress</name>
    <dbReference type="NCBI Taxonomy" id="3702"/>
    <lineage>
        <taxon>Eukaryota</taxon>
        <taxon>Viridiplantae</taxon>
        <taxon>Streptophyta</taxon>
        <taxon>Embryophyta</taxon>
        <taxon>Tracheophyta</taxon>
        <taxon>Spermatophyta</taxon>
        <taxon>Magnoliopsida</taxon>
        <taxon>eudicotyledons</taxon>
        <taxon>Gunneridae</taxon>
        <taxon>Pentapetalae</taxon>
        <taxon>rosids</taxon>
        <taxon>malvids</taxon>
        <taxon>Brassicales</taxon>
        <taxon>Brassicaceae</taxon>
        <taxon>Camelineae</taxon>
        <taxon>Arabidopsis</taxon>
    </lineage>
</organism>
<name>D6KL3_ARATH</name>
<feature type="chain" id="PRO_0000086166" description="Serine/threonine-protein kinase D6PKL3">
    <location>
        <begin position="1"/>
        <end position="578"/>
    </location>
</feature>
<feature type="domain" description="Protein kinase" evidence="2">
    <location>
        <begin position="182"/>
        <end position="516"/>
    </location>
</feature>
<feature type="region of interest" description="Disordered" evidence="4">
    <location>
        <begin position="1"/>
        <end position="64"/>
    </location>
</feature>
<feature type="region of interest" description="Activation loop" evidence="1">
    <location>
        <begin position="325"/>
        <end position="426"/>
    </location>
</feature>
<feature type="short sequence motif" description="PIF">
    <location>
        <begin position="575"/>
        <end position="578"/>
    </location>
</feature>
<feature type="compositionally biased region" description="Low complexity" evidence="4">
    <location>
        <begin position="1"/>
        <end position="24"/>
    </location>
</feature>
<feature type="compositionally biased region" description="Polar residues" evidence="4">
    <location>
        <begin position="25"/>
        <end position="34"/>
    </location>
</feature>
<feature type="compositionally biased region" description="Low complexity" evidence="4">
    <location>
        <begin position="53"/>
        <end position="64"/>
    </location>
</feature>
<feature type="active site" description="Proton acceptor" evidence="2 3">
    <location>
        <position position="307"/>
    </location>
</feature>
<feature type="binding site" evidence="2">
    <location>
        <begin position="188"/>
        <end position="196"/>
    </location>
    <ligand>
        <name>ATP</name>
        <dbReference type="ChEBI" id="CHEBI:30616"/>
    </ligand>
</feature>
<feature type="binding site" evidence="2">
    <location>
        <position position="211"/>
    </location>
    <ligand>
        <name>ATP</name>
        <dbReference type="ChEBI" id="CHEBI:30616"/>
    </ligand>
</feature>
<sequence length="578" mass="64286">MDSSSSVVYVGSSSKSRNFQSKSKGSITSFSIDSRGTKKSMKTLLIPEPEPTSPEVIESSVSSVSAESETPISIIRKKKQSEPRFYSSPTNTFYTEAKQSFTNTEFSECASISTIGIGGIDLEKNGVMIYRGSIGSDVSDESSSSGLSNAAYKPHRDNNDKRWVAIQEVRSRVGSSLEAKDFKLIKKLGGGDIGNVYLAELIGTGVSFAVKVMEKAAIAARKKLVRAQTEKEILQSLDHPFLPTLYSHFETEMNSCLVMEFCPGGDLHSLRQKQRGKYFPEQAARFYVAEVLLAMEYLHMLGIIYRDLKPENVLVREDGHIMLSDFDLSLRCAVSPTLVRFAAITLESKSSSYCIQPTCVDQSSCIVQPDCIQPVCFTPRFLSKGKHRKKSNDMSRQIRPLPELIAEPTSARSMSFVGTHEYLAPEIIKGEGHGSAVDWWTFGIFLYELLFGITPFRGGDNRATLFNVVGQPLRFPEHPNVSFAARDLIRGLLVKEPQHRLAYRRGATEIKQHPFFQSVNWALIRCTSPPQIPQPVKPMDQAHSVRHGFSQGHGHVGYDKPPTVDVKPSGNYLEIDFF</sequence>
<reference key="1">
    <citation type="journal article" date="1992" name="Gene">
        <title>Characterization of a gene that encodes a homologue of protein kinase in Arabidopsis thaliana.</title>
        <authorList>
            <person name="Hayashida N."/>
            <person name="Mizoguchi T."/>
            <person name="Yamaguchi-Shinozaki K."/>
            <person name="Shinozaki K."/>
        </authorList>
    </citation>
    <scope>NUCLEOTIDE SEQUENCE [GENOMIC DNA]</scope>
</reference>
<reference key="2">
    <citation type="journal article" date="2000" name="DNA Res.">
        <title>Structural analysis of Arabidopsis thaliana chromosome 3. I. Sequence features of the regions of 4,504,864 bp covered by sixty P1 and TAC clones.</title>
        <authorList>
            <person name="Sato S."/>
            <person name="Nakamura Y."/>
            <person name="Kaneko T."/>
            <person name="Katoh T."/>
            <person name="Asamizu E."/>
            <person name="Tabata S."/>
        </authorList>
    </citation>
    <scope>NUCLEOTIDE SEQUENCE [LARGE SCALE GENOMIC DNA]</scope>
    <source>
        <strain>cv. Columbia</strain>
    </source>
</reference>
<reference key="3">
    <citation type="journal article" date="2017" name="Plant J.">
        <title>Araport11: a complete reannotation of the Arabidopsis thaliana reference genome.</title>
        <authorList>
            <person name="Cheng C.Y."/>
            <person name="Krishnakumar V."/>
            <person name="Chan A.P."/>
            <person name="Thibaud-Nissen F."/>
            <person name="Schobel S."/>
            <person name="Town C.D."/>
        </authorList>
    </citation>
    <scope>GENOME REANNOTATION</scope>
    <source>
        <strain>cv. Columbia</strain>
    </source>
</reference>
<reference key="4">
    <citation type="journal article" date="2003" name="Science">
        <title>Empirical analysis of transcriptional activity in the Arabidopsis genome.</title>
        <authorList>
            <person name="Yamada K."/>
            <person name="Lim J."/>
            <person name="Dale J.M."/>
            <person name="Chen H."/>
            <person name="Shinn P."/>
            <person name="Palm C.J."/>
            <person name="Southwick A.M."/>
            <person name="Wu H.C."/>
            <person name="Kim C.J."/>
            <person name="Nguyen M."/>
            <person name="Pham P.K."/>
            <person name="Cheuk R.F."/>
            <person name="Karlin-Newmann G."/>
            <person name="Liu S.X."/>
            <person name="Lam B."/>
            <person name="Sakano H."/>
            <person name="Wu T."/>
            <person name="Yu G."/>
            <person name="Miranda M."/>
            <person name="Quach H.L."/>
            <person name="Tripp M."/>
            <person name="Chang C.H."/>
            <person name="Lee J.M."/>
            <person name="Toriumi M.J."/>
            <person name="Chan M.M."/>
            <person name="Tang C.C."/>
            <person name="Onodera C.S."/>
            <person name="Deng J.M."/>
            <person name="Akiyama K."/>
            <person name="Ansari Y."/>
            <person name="Arakawa T."/>
            <person name="Banh J."/>
            <person name="Banno F."/>
            <person name="Bowser L."/>
            <person name="Brooks S.Y."/>
            <person name="Carninci P."/>
            <person name="Chao Q."/>
            <person name="Choy N."/>
            <person name="Enju A."/>
            <person name="Goldsmith A.D."/>
            <person name="Gurjal M."/>
            <person name="Hansen N.F."/>
            <person name="Hayashizaki Y."/>
            <person name="Johnson-Hopson C."/>
            <person name="Hsuan V.W."/>
            <person name="Iida K."/>
            <person name="Karnes M."/>
            <person name="Khan S."/>
            <person name="Koesema E."/>
            <person name="Ishida J."/>
            <person name="Jiang P.X."/>
            <person name="Jones T."/>
            <person name="Kawai J."/>
            <person name="Kamiya A."/>
            <person name="Meyers C."/>
            <person name="Nakajima M."/>
            <person name="Narusaka M."/>
            <person name="Seki M."/>
            <person name="Sakurai T."/>
            <person name="Satou M."/>
            <person name="Tamse R."/>
            <person name="Vaysberg M."/>
            <person name="Wallender E.K."/>
            <person name="Wong C."/>
            <person name="Yamamura Y."/>
            <person name="Yuan S."/>
            <person name="Shinozaki K."/>
            <person name="Davis R.W."/>
            <person name="Theologis A."/>
            <person name="Ecker J.R."/>
        </authorList>
    </citation>
    <scope>NUCLEOTIDE SEQUENCE [LARGE SCALE MRNA]</scope>
    <source>
        <strain>cv. Columbia</strain>
    </source>
</reference>
<reference key="5">
    <citation type="submission" date="2004-09" db="EMBL/GenBank/DDBJ databases">
        <title>Large-scale analysis of RIKEN Arabidopsis full-length (RAFL) cDNAs.</title>
        <authorList>
            <person name="Totoki Y."/>
            <person name="Seki M."/>
            <person name="Ishida J."/>
            <person name="Nakajima M."/>
            <person name="Enju A."/>
            <person name="Kamiya A."/>
            <person name="Narusaka M."/>
            <person name="Shin-i T."/>
            <person name="Nakagawa M."/>
            <person name="Sakamoto N."/>
            <person name="Oishi K."/>
            <person name="Kohara Y."/>
            <person name="Kobayashi M."/>
            <person name="Toyoda A."/>
            <person name="Sakaki Y."/>
            <person name="Sakurai T."/>
            <person name="Iida K."/>
            <person name="Akiyama K."/>
            <person name="Satou M."/>
            <person name="Toyoda T."/>
            <person name="Konagaya A."/>
            <person name="Carninci P."/>
            <person name="Kawai J."/>
            <person name="Hayashizaki Y."/>
            <person name="Shinozaki K."/>
        </authorList>
    </citation>
    <scope>NUCLEOTIDE SEQUENCE [LARGE SCALE MRNA]</scope>
    <source>
        <strain>cv. Columbia</strain>
    </source>
</reference>
<reference key="6">
    <citation type="journal article" date="2003" name="Trends Plant Sci.">
        <title>Growth signalling pathways in Arabidopsis and the AGC protein kinases.</title>
        <authorList>
            <person name="Boegre L."/>
            <person name="Okresz L."/>
            <person name="Henriques R."/>
            <person name="Anthony R.G."/>
        </authorList>
    </citation>
    <scope>GENE FAMILY</scope>
    <scope>REVIEW</scope>
</reference>
<reference key="7">
    <citation type="journal article" date="2009" name="Development">
        <title>The polarly localized D6 PROTEIN KINASE is required for efficient auxin transport in Arabidopsis thaliana.</title>
        <authorList>
            <person name="Zourelidou M."/>
            <person name="Muller I."/>
            <person name="Willige B.C."/>
            <person name="Nill C."/>
            <person name="Jikumaru Y."/>
            <person name="Li H."/>
            <person name="Schwechheimer C."/>
        </authorList>
    </citation>
    <scope>FUNCTION</scope>
    <scope>DISRUPTION PHENOTYPE</scope>
</reference>
<reference key="8">
    <citation type="journal article" date="2013" name="Plant Cell">
        <title>D6PK AGCVIII kinases are required for auxin transport and phototropic hypocotyl bending in Arabidopsis.</title>
        <authorList>
            <person name="Willige B.C."/>
            <person name="Ahlers S."/>
            <person name="Zourelidou M."/>
            <person name="Barbosa I.C."/>
            <person name="Demarsy E."/>
            <person name="Trevisan M."/>
            <person name="Davis P.A."/>
            <person name="Roelfsema M.R."/>
            <person name="Hangarter R."/>
            <person name="Fankhauser C."/>
            <person name="Schwechheimer C."/>
        </authorList>
    </citation>
    <scope>FUNCTION</scope>
    <scope>DISRUPTION PHENOTYPE</scope>
</reference>
<dbReference type="EC" id="2.7.11.1"/>
<dbReference type="EMBL" id="D10910">
    <property type="protein sequence ID" value="BAA01716.1"/>
    <property type="molecule type" value="Genomic_DNA"/>
</dbReference>
<dbReference type="EMBL" id="AB025626">
    <property type="protein sequence ID" value="BAB01288.1"/>
    <property type="molecule type" value="Genomic_DNA"/>
</dbReference>
<dbReference type="EMBL" id="CP002686">
    <property type="protein sequence ID" value="AEE77339.1"/>
    <property type="molecule type" value="Genomic_DNA"/>
</dbReference>
<dbReference type="EMBL" id="CP002686">
    <property type="protein sequence ID" value="AEE77340.1"/>
    <property type="molecule type" value="Genomic_DNA"/>
</dbReference>
<dbReference type="EMBL" id="BT010571">
    <property type="protein sequence ID" value="AAQ65194.1"/>
    <property type="molecule type" value="mRNA"/>
</dbReference>
<dbReference type="EMBL" id="AK175529">
    <property type="protein sequence ID" value="BAD43292.1"/>
    <property type="molecule type" value="mRNA"/>
</dbReference>
<dbReference type="EMBL" id="AK176399">
    <property type="protein sequence ID" value="BAD44162.1"/>
    <property type="molecule type" value="mRNA"/>
</dbReference>
<dbReference type="PIR" id="JC1385">
    <property type="entry name" value="JC1385"/>
</dbReference>
<dbReference type="RefSeq" id="NP_001030784.1">
    <property type="nucleotide sequence ID" value="NM_001035707.3"/>
</dbReference>
<dbReference type="RefSeq" id="NP_189395.1">
    <property type="nucleotide sequence ID" value="NM_113674.4"/>
</dbReference>
<dbReference type="SMR" id="Q05999"/>
<dbReference type="BioGRID" id="7710">
    <property type="interactions" value="3"/>
</dbReference>
<dbReference type="FunCoup" id="Q05999">
    <property type="interactions" value="210"/>
</dbReference>
<dbReference type="IntAct" id="Q05999">
    <property type="interactions" value="4"/>
</dbReference>
<dbReference type="STRING" id="3702.Q05999"/>
<dbReference type="iPTMnet" id="Q05999"/>
<dbReference type="PaxDb" id="3702-AT3G27580.1"/>
<dbReference type="ProteomicsDB" id="222742"/>
<dbReference type="EnsemblPlants" id="AT3G27580.1">
    <property type="protein sequence ID" value="AT3G27580.1"/>
    <property type="gene ID" value="AT3G27580"/>
</dbReference>
<dbReference type="EnsemblPlants" id="AT3G27580.2">
    <property type="protein sequence ID" value="AT3G27580.2"/>
    <property type="gene ID" value="AT3G27580"/>
</dbReference>
<dbReference type="GeneID" id="822380"/>
<dbReference type="Gramene" id="AT3G27580.1">
    <property type="protein sequence ID" value="AT3G27580.1"/>
    <property type="gene ID" value="AT3G27580"/>
</dbReference>
<dbReference type="Gramene" id="AT3G27580.2">
    <property type="protein sequence ID" value="AT3G27580.2"/>
    <property type="gene ID" value="AT3G27580"/>
</dbReference>
<dbReference type="KEGG" id="ath:AT3G27580"/>
<dbReference type="Araport" id="AT3G27580"/>
<dbReference type="TAIR" id="AT3G27580">
    <property type="gene designation" value="ATPK7"/>
</dbReference>
<dbReference type="eggNOG" id="KOG0610">
    <property type="taxonomic scope" value="Eukaryota"/>
</dbReference>
<dbReference type="HOGENOM" id="CLU_000288_63_30_1"/>
<dbReference type="InParanoid" id="Q05999"/>
<dbReference type="OMA" id="QPDCITP"/>
<dbReference type="PhylomeDB" id="Q05999"/>
<dbReference type="PRO" id="PR:Q05999"/>
<dbReference type="Proteomes" id="UP000006548">
    <property type="component" value="Chromosome 3"/>
</dbReference>
<dbReference type="ExpressionAtlas" id="Q05999">
    <property type="expression patterns" value="baseline and differential"/>
</dbReference>
<dbReference type="GO" id="GO:0005886">
    <property type="term" value="C:plasma membrane"/>
    <property type="evidence" value="ECO:0000314"/>
    <property type="project" value="TAIR"/>
</dbReference>
<dbReference type="GO" id="GO:0005524">
    <property type="term" value="F:ATP binding"/>
    <property type="evidence" value="ECO:0007669"/>
    <property type="project" value="UniProtKB-KW"/>
</dbReference>
<dbReference type="GO" id="GO:0016301">
    <property type="term" value="F:kinase activity"/>
    <property type="evidence" value="ECO:0000250"/>
    <property type="project" value="TAIR"/>
</dbReference>
<dbReference type="GO" id="GO:0004672">
    <property type="term" value="F:protein kinase activity"/>
    <property type="evidence" value="ECO:0000314"/>
    <property type="project" value="TAIR"/>
</dbReference>
<dbReference type="GO" id="GO:0106310">
    <property type="term" value="F:protein serine kinase activity"/>
    <property type="evidence" value="ECO:0007669"/>
    <property type="project" value="RHEA"/>
</dbReference>
<dbReference type="GO" id="GO:0004674">
    <property type="term" value="F:protein serine/threonine kinase activity"/>
    <property type="evidence" value="ECO:0000250"/>
    <property type="project" value="TAIR"/>
</dbReference>
<dbReference type="GO" id="GO:0009734">
    <property type="term" value="P:auxin-activated signaling pathway"/>
    <property type="evidence" value="ECO:0007669"/>
    <property type="project" value="UniProtKB-KW"/>
</dbReference>
<dbReference type="GO" id="GO:0010540">
    <property type="term" value="P:basipetal auxin transport"/>
    <property type="evidence" value="ECO:0000304"/>
    <property type="project" value="UniProtKB"/>
</dbReference>
<dbReference type="GO" id="GO:0009638">
    <property type="term" value="P:phototropism"/>
    <property type="evidence" value="ECO:0000315"/>
    <property type="project" value="TAIR"/>
</dbReference>
<dbReference type="GO" id="GO:0062075">
    <property type="term" value="P:pollen aperture formation"/>
    <property type="evidence" value="ECO:0000315"/>
    <property type="project" value="TAIR"/>
</dbReference>
<dbReference type="GO" id="GO:0009555">
    <property type="term" value="P:pollen development"/>
    <property type="evidence" value="ECO:0000315"/>
    <property type="project" value="TAIR"/>
</dbReference>
<dbReference type="GO" id="GO:0006468">
    <property type="term" value="P:protein phosphorylation"/>
    <property type="evidence" value="ECO:0000304"/>
    <property type="project" value="UniProtKB"/>
</dbReference>
<dbReference type="CDD" id="cd05574">
    <property type="entry name" value="STKc_phototropin_like"/>
    <property type="match status" value="1"/>
</dbReference>
<dbReference type="FunFam" id="3.30.200.20:FF:000753">
    <property type="entry name" value="Serine/Threonine Kinase"/>
    <property type="match status" value="1"/>
</dbReference>
<dbReference type="FunFam" id="1.10.510.10:FF:000020">
    <property type="entry name" value="serine/threonine-protein kinase D6PK-like"/>
    <property type="match status" value="1"/>
</dbReference>
<dbReference type="FunFam" id="1.10.510.10:FF:000028">
    <property type="entry name" value="serine/threonine-protein kinase D6PK-like"/>
    <property type="match status" value="1"/>
</dbReference>
<dbReference type="Gene3D" id="3.30.200.20">
    <property type="entry name" value="Phosphorylase Kinase, domain 1"/>
    <property type="match status" value="1"/>
</dbReference>
<dbReference type="Gene3D" id="1.10.510.10">
    <property type="entry name" value="Transferase(Phosphotransferase) domain 1"/>
    <property type="match status" value="2"/>
</dbReference>
<dbReference type="InterPro" id="IPR011009">
    <property type="entry name" value="Kinase-like_dom_sf"/>
</dbReference>
<dbReference type="InterPro" id="IPR000719">
    <property type="entry name" value="Prot_kinase_dom"/>
</dbReference>
<dbReference type="InterPro" id="IPR008271">
    <property type="entry name" value="Ser/Thr_kinase_AS"/>
</dbReference>
<dbReference type="PANTHER" id="PTHR45637">
    <property type="entry name" value="FLIPPASE KINASE 1-RELATED"/>
    <property type="match status" value="1"/>
</dbReference>
<dbReference type="Pfam" id="PF00069">
    <property type="entry name" value="Pkinase"/>
    <property type="match status" value="2"/>
</dbReference>
<dbReference type="SMART" id="SM00220">
    <property type="entry name" value="S_TKc"/>
    <property type="match status" value="1"/>
</dbReference>
<dbReference type="SUPFAM" id="SSF56112">
    <property type="entry name" value="Protein kinase-like (PK-like)"/>
    <property type="match status" value="1"/>
</dbReference>
<dbReference type="PROSITE" id="PS50011">
    <property type="entry name" value="PROTEIN_KINASE_DOM"/>
    <property type="match status" value="1"/>
</dbReference>
<dbReference type="PROSITE" id="PS00108">
    <property type="entry name" value="PROTEIN_KINASE_ST"/>
    <property type="match status" value="1"/>
</dbReference>
<keyword id="KW-0067">ATP-binding</keyword>
<keyword id="KW-0927">Auxin signaling pathway</keyword>
<keyword id="KW-1003">Cell membrane</keyword>
<keyword id="KW-0418">Kinase</keyword>
<keyword id="KW-0472">Membrane</keyword>
<keyword id="KW-0547">Nucleotide-binding</keyword>
<keyword id="KW-1185">Reference proteome</keyword>
<keyword id="KW-0723">Serine/threonine-protein kinase</keyword>
<keyword id="KW-0808">Transferase</keyword>